<organism>
    <name type="scientific">Methanobrevibacter smithii (strain ATCC 35061 / DSM 861 / OCM 144 / PS)</name>
    <dbReference type="NCBI Taxonomy" id="420247"/>
    <lineage>
        <taxon>Archaea</taxon>
        <taxon>Methanobacteriati</taxon>
        <taxon>Methanobacteriota</taxon>
        <taxon>Methanomada group</taxon>
        <taxon>Methanobacteria</taxon>
        <taxon>Methanobacteriales</taxon>
        <taxon>Methanobacteriaceae</taxon>
        <taxon>Methanobrevibacter</taxon>
    </lineage>
</organism>
<proteinExistence type="inferred from homology"/>
<sequence>MAKAIYVKFDTPEELANQAEEALKTAQDSGKVAKGTNEVTKFIERGDAALVVIAEDVDPAEIVAHIPVLADEKEIPYIYLPTKEQVGGAAGLTVGTASACIVDAGDAEGDVAEIVEKIAELKE</sequence>
<keyword id="KW-0963">Cytoplasm</keyword>
<keyword id="KW-0687">Ribonucleoprotein</keyword>
<keyword id="KW-0689">Ribosomal protein</keyword>
<keyword id="KW-0694">RNA-binding</keyword>
<keyword id="KW-0699">rRNA-binding</keyword>
<keyword id="KW-0819">tRNA processing</keyword>
<protein>
    <recommendedName>
        <fullName evidence="1">Large ribosomal subunit protein eL8</fullName>
    </recommendedName>
    <alternativeName>
        <fullName evidence="2">50S ribosomal protein L7Ae</fullName>
    </alternativeName>
    <alternativeName>
        <fullName evidence="1">Ribosomal protein L8e</fullName>
    </alternativeName>
</protein>
<reference key="1">
    <citation type="journal article" date="2007" name="Proc. Natl. Acad. Sci. U.S.A.">
        <title>Genomic and metabolic adaptations of Methanobrevibacter smithii to the human gut.</title>
        <authorList>
            <person name="Samuel B.S."/>
            <person name="Hansen E.E."/>
            <person name="Manchester J.K."/>
            <person name="Coutinho P.M."/>
            <person name="Henrissat B."/>
            <person name="Fulton R."/>
            <person name="Latreille P."/>
            <person name="Kim K."/>
            <person name="Wilson R.K."/>
            <person name="Gordon J.I."/>
        </authorList>
    </citation>
    <scope>NUCLEOTIDE SEQUENCE [LARGE SCALE GENOMIC DNA]</scope>
    <source>
        <strain>ATCC 35061 / DSM 861 / OCM 144 / PS</strain>
    </source>
</reference>
<gene>
    <name evidence="1" type="primary">rpl7ae</name>
    <name type="ordered locus">Msm_0206</name>
</gene>
<comment type="function">
    <text evidence="1">Multifunctional RNA-binding protein that recognizes the K-turn motif in ribosomal RNA, the RNA component of RNase P, box H/ACA, box C/D and box C'/D' sRNAs.</text>
</comment>
<comment type="subunit">
    <text evidence="1">Part of the 50S ribosomal subunit. Probably part of the RNase P complex.</text>
</comment>
<comment type="subcellular location">
    <subcellularLocation>
        <location evidence="1">Cytoplasm</location>
    </subcellularLocation>
</comment>
<comment type="similarity">
    <text evidence="1">Belongs to the eukaryotic ribosomal protein eL8 family.</text>
</comment>
<feature type="chain" id="PRO_1000194097" description="Large ribosomal subunit protein eL8">
    <location>
        <begin position="1"/>
        <end position="123"/>
    </location>
</feature>
<name>RL7A_METS3</name>
<accession>A5UJN3</accession>
<evidence type="ECO:0000255" key="1">
    <source>
        <dbReference type="HAMAP-Rule" id="MF_00326"/>
    </source>
</evidence>
<evidence type="ECO:0000305" key="2"/>
<dbReference type="EMBL" id="CP000678">
    <property type="protein sequence ID" value="ABQ86411.1"/>
    <property type="molecule type" value="Genomic_DNA"/>
</dbReference>
<dbReference type="RefSeq" id="WP_011953752.1">
    <property type="nucleotide sequence ID" value="NZ_CP117965.1"/>
</dbReference>
<dbReference type="SMR" id="A5UJN3"/>
<dbReference type="STRING" id="420247.Msm_0206"/>
<dbReference type="EnsemblBacteria" id="ABQ86411">
    <property type="protein sequence ID" value="ABQ86411"/>
    <property type="gene ID" value="Msm_0206"/>
</dbReference>
<dbReference type="GeneID" id="78816830"/>
<dbReference type="KEGG" id="msi:Msm_0206"/>
<dbReference type="PATRIC" id="fig|420247.28.peg.210"/>
<dbReference type="eggNOG" id="arCOG01751">
    <property type="taxonomic scope" value="Archaea"/>
</dbReference>
<dbReference type="HOGENOM" id="CLU_084513_4_0_2"/>
<dbReference type="Proteomes" id="UP000001992">
    <property type="component" value="Chromosome"/>
</dbReference>
<dbReference type="GO" id="GO:0005737">
    <property type="term" value="C:cytoplasm"/>
    <property type="evidence" value="ECO:0007669"/>
    <property type="project" value="UniProtKB-SubCell"/>
</dbReference>
<dbReference type="GO" id="GO:1990904">
    <property type="term" value="C:ribonucleoprotein complex"/>
    <property type="evidence" value="ECO:0007669"/>
    <property type="project" value="UniProtKB-KW"/>
</dbReference>
<dbReference type="GO" id="GO:0005840">
    <property type="term" value="C:ribosome"/>
    <property type="evidence" value="ECO:0007669"/>
    <property type="project" value="UniProtKB-KW"/>
</dbReference>
<dbReference type="GO" id="GO:0004526">
    <property type="term" value="F:ribonuclease P activity"/>
    <property type="evidence" value="ECO:0007669"/>
    <property type="project" value="UniProtKB-UniRule"/>
</dbReference>
<dbReference type="GO" id="GO:0019843">
    <property type="term" value="F:rRNA binding"/>
    <property type="evidence" value="ECO:0007669"/>
    <property type="project" value="UniProtKB-KW"/>
</dbReference>
<dbReference type="GO" id="GO:0003735">
    <property type="term" value="F:structural constituent of ribosome"/>
    <property type="evidence" value="ECO:0007669"/>
    <property type="project" value="InterPro"/>
</dbReference>
<dbReference type="GO" id="GO:0006412">
    <property type="term" value="P:translation"/>
    <property type="evidence" value="ECO:0007669"/>
    <property type="project" value="UniProtKB-UniRule"/>
</dbReference>
<dbReference type="GO" id="GO:0001682">
    <property type="term" value="P:tRNA 5'-leader removal"/>
    <property type="evidence" value="ECO:0007669"/>
    <property type="project" value="UniProtKB-UniRule"/>
</dbReference>
<dbReference type="FunFam" id="3.30.1330.30:FF:000020">
    <property type="entry name" value="50S ribosomal protein L7Ae"/>
    <property type="match status" value="1"/>
</dbReference>
<dbReference type="Gene3D" id="3.30.1330.30">
    <property type="match status" value="1"/>
</dbReference>
<dbReference type="HAMAP" id="MF_00326">
    <property type="entry name" value="Ribosomal_eL8"/>
    <property type="match status" value="1"/>
</dbReference>
<dbReference type="InterPro" id="IPR050257">
    <property type="entry name" value="eL8/uL1-like"/>
</dbReference>
<dbReference type="InterPro" id="IPR029064">
    <property type="entry name" value="Ribosomal_eL30-like_sf"/>
</dbReference>
<dbReference type="InterPro" id="IPR004038">
    <property type="entry name" value="Ribosomal_eL8/eL30/eS12/Gad45"/>
</dbReference>
<dbReference type="InterPro" id="IPR018492">
    <property type="entry name" value="Ribosomal_eL8/Nhp2"/>
</dbReference>
<dbReference type="InterPro" id="IPR022481">
    <property type="entry name" value="Ribosomal_eL8_arc"/>
</dbReference>
<dbReference type="NCBIfam" id="TIGR03677">
    <property type="entry name" value="eL8_ribo"/>
    <property type="match status" value="1"/>
</dbReference>
<dbReference type="PANTHER" id="PTHR23105">
    <property type="entry name" value="RIBOSOMAL PROTEIN L7AE FAMILY MEMBER"/>
    <property type="match status" value="1"/>
</dbReference>
<dbReference type="Pfam" id="PF01248">
    <property type="entry name" value="Ribosomal_L7Ae"/>
    <property type="match status" value="1"/>
</dbReference>
<dbReference type="PRINTS" id="PR00881">
    <property type="entry name" value="L7ARS6FAMILY"/>
</dbReference>
<dbReference type="PRINTS" id="PR00884">
    <property type="entry name" value="RIBOSOMALHS6"/>
</dbReference>
<dbReference type="SUPFAM" id="SSF55315">
    <property type="entry name" value="L30e-like"/>
    <property type="match status" value="1"/>
</dbReference>